<evidence type="ECO:0000255" key="1">
    <source>
        <dbReference type="HAMAP-Rule" id="MF_01694"/>
    </source>
</evidence>
<evidence type="ECO:0000255" key="2">
    <source>
        <dbReference type="PROSITE-ProRule" id="PRU01266"/>
    </source>
</evidence>
<sequence>MTQAHTATTVTTVSVDSLRQSARSHALPDDAAWRVDDVAALFALPFNDLLFRAQQVHREHFDANTVQLSTLLSIKTGGCEEDCGYCPQSAHHDAGVKAEKLMALDEVLDAARAAKANGATRFCMGAAWRSPKDRHLEPVMDMVREVKAMGLETCVTLGMLKAEQAQQLKEAGLDYYNHNLDTSPEFYGKIITTRTYQDRLDTIGHVRDAGINVCCGGIVGMGEAREARAGLIAQLANMDPYPESVPINNLVQVEGTPLAGTEALDPFEFVRTIAVARITMPRAMVRLSAGREAMDEALQALCFMAGANSIFYGEKLLTTGNPQADRDRALLARLDIRAEGYAG</sequence>
<gene>
    <name evidence="1" type="primary">bioB</name>
    <name type="ordered locus">H16_A0183</name>
</gene>
<feature type="chain" id="PRO_0000381572" description="Biotin synthase">
    <location>
        <begin position="1"/>
        <end position="343"/>
    </location>
</feature>
<feature type="domain" description="Radical SAM core" evidence="2">
    <location>
        <begin position="64"/>
        <end position="291"/>
    </location>
</feature>
<feature type="binding site" evidence="1">
    <location>
        <position position="79"/>
    </location>
    <ligand>
        <name>[4Fe-4S] cluster</name>
        <dbReference type="ChEBI" id="CHEBI:49883"/>
        <note>4Fe-4S-S-AdoMet</note>
    </ligand>
</feature>
<feature type="binding site" evidence="1">
    <location>
        <position position="83"/>
    </location>
    <ligand>
        <name>[4Fe-4S] cluster</name>
        <dbReference type="ChEBI" id="CHEBI:49883"/>
        <note>4Fe-4S-S-AdoMet</note>
    </ligand>
</feature>
<feature type="binding site" evidence="1">
    <location>
        <position position="86"/>
    </location>
    <ligand>
        <name>[4Fe-4S] cluster</name>
        <dbReference type="ChEBI" id="CHEBI:49883"/>
        <note>4Fe-4S-S-AdoMet</note>
    </ligand>
</feature>
<feature type="binding site" evidence="1">
    <location>
        <position position="123"/>
    </location>
    <ligand>
        <name>[2Fe-2S] cluster</name>
        <dbReference type="ChEBI" id="CHEBI:190135"/>
    </ligand>
</feature>
<feature type="binding site" evidence="1">
    <location>
        <position position="154"/>
    </location>
    <ligand>
        <name>[2Fe-2S] cluster</name>
        <dbReference type="ChEBI" id="CHEBI:190135"/>
    </ligand>
</feature>
<feature type="binding site" evidence="1">
    <location>
        <position position="214"/>
    </location>
    <ligand>
        <name>[2Fe-2S] cluster</name>
        <dbReference type="ChEBI" id="CHEBI:190135"/>
    </ligand>
</feature>
<feature type="binding site" evidence="1">
    <location>
        <position position="286"/>
    </location>
    <ligand>
        <name>[2Fe-2S] cluster</name>
        <dbReference type="ChEBI" id="CHEBI:190135"/>
    </ligand>
</feature>
<organism>
    <name type="scientific">Cupriavidus necator (strain ATCC 17699 / DSM 428 / KCTC 22496 / NCIMB 10442 / H16 / Stanier 337)</name>
    <name type="common">Ralstonia eutropha</name>
    <dbReference type="NCBI Taxonomy" id="381666"/>
    <lineage>
        <taxon>Bacteria</taxon>
        <taxon>Pseudomonadati</taxon>
        <taxon>Pseudomonadota</taxon>
        <taxon>Betaproteobacteria</taxon>
        <taxon>Burkholderiales</taxon>
        <taxon>Burkholderiaceae</taxon>
        <taxon>Cupriavidus</taxon>
    </lineage>
</organism>
<proteinExistence type="inferred from homology"/>
<dbReference type="EC" id="2.8.1.6" evidence="1"/>
<dbReference type="EMBL" id="AM260479">
    <property type="protein sequence ID" value="CAJ91335.1"/>
    <property type="molecule type" value="Genomic_DNA"/>
</dbReference>
<dbReference type="RefSeq" id="WP_010813271.1">
    <property type="nucleotide sequence ID" value="NZ_CP039287.1"/>
</dbReference>
<dbReference type="SMR" id="Q0KF86"/>
<dbReference type="STRING" id="381666.H16_A0183"/>
<dbReference type="KEGG" id="reh:H16_A0183"/>
<dbReference type="eggNOG" id="COG0502">
    <property type="taxonomic scope" value="Bacteria"/>
</dbReference>
<dbReference type="HOGENOM" id="CLU_033172_1_2_4"/>
<dbReference type="OrthoDB" id="9786826at2"/>
<dbReference type="UniPathway" id="UPA00078">
    <property type="reaction ID" value="UER00162"/>
</dbReference>
<dbReference type="Proteomes" id="UP000008210">
    <property type="component" value="Chromosome 1"/>
</dbReference>
<dbReference type="GO" id="GO:0051537">
    <property type="term" value="F:2 iron, 2 sulfur cluster binding"/>
    <property type="evidence" value="ECO:0007669"/>
    <property type="project" value="UniProtKB-KW"/>
</dbReference>
<dbReference type="GO" id="GO:0051539">
    <property type="term" value="F:4 iron, 4 sulfur cluster binding"/>
    <property type="evidence" value="ECO:0007669"/>
    <property type="project" value="UniProtKB-KW"/>
</dbReference>
<dbReference type="GO" id="GO:0004076">
    <property type="term" value="F:biotin synthase activity"/>
    <property type="evidence" value="ECO:0007669"/>
    <property type="project" value="UniProtKB-UniRule"/>
</dbReference>
<dbReference type="GO" id="GO:0005506">
    <property type="term" value="F:iron ion binding"/>
    <property type="evidence" value="ECO:0007669"/>
    <property type="project" value="UniProtKB-UniRule"/>
</dbReference>
<dbReference type="GO" id="GO:0009102">
    <property type="term" value="P:biotin biosynthetic process"/>
    <property type="evidence" value="ECO:0007669"/>
    <property type="project" value="UniProtKB-UniRule"/>
</dbReference>
<dbReference type="CDD" id="cd01335">
    <property type="entry name" value="Radical_SAM"/>
    <property type="match status" value="1"/>
</dbReference>
<dbReference type="FunFam" id="3.20.20.70:FF:000011">
    <property type="entry name" value="Biotin synthase"/>
    <property type="match status" value="1"/>
</dbReference>
<dbReference type="Gene3D" id="3.20.20.70">
    <property type="entry name" value="Aldolase class I"/>
    <property type="match status" value="1"/>
</dbReference>
<dbReference type="HAMAP" id="MF_01694">
    <property type="entry name" value="BioB"/>
    <property type="match status" value="1"/>
</dbReference>
<dbReference type="InterPro" id="IPR013785">
    <property type="entry name" value="Aldolase_TIM"/>
</dbReference>
<dbReference type="InterPro" id="IPR010722">
    <property type="entry name" value="BATS_dom"/>
</dbReference>
<dbReference type="InterPro" id="IPR002684">
    <property type="entry name" value="Biotin_synth/BioAB"/>
</dbReference>
<dbReference type="InterPro" id="IPR024177">
    <property type="entry name" value="Biotin_synthase"/>
</dbReference>
<dbReference type="InterPro" id="IPR006638">
    <property type="entry name" value="Elp3/MiaA/NifB-like_rSAM"/>
</dbReference>
<dbReference type="InterPro" id="IPR007197">
    <property type="entry name" value="rSAM"/>
</dbReference>
<dbReference type="NCBIfam" id="TIGR00433">
    <property type="entry name" value="bioB"/>
    <property type="match status" value="1"/>
</dbReference>
<dbReference type="PANTHER" id="PTHR22976">
    <property type="entry name" value="BIOTIN SYNTHASE"/>
    <property type="match status" value="1"/>
</dbReference>
<dbReference type="PANTHER" id="PTHR22976:SF2">
    <property type="entry name" value="BIOTIN SYNTHASE, MITOCHONDRIAL"/>
    <property type="match status" value="1"/>
</dbReference>
<dbReference type="Pfam" id="PF06968">
    <property type="entry name" value="BATS"/>
    <property type="match status" value="1"/>
</dbReference>
<dbReference type="Pfam" id="PF04055">
    <property type="entry name" value="Radical_SAM"/>
    <property type="match status" value="1"/>
</dbReference>
<dbReference type="PIRSF" id="PIRSF001619">
    <property type="entry name" value="Biotin_synth"/>
    <property type="match status" value="1"/>
</dbReference>
<dbReference type="SFLD" id="SFLDF00272">
    <property type="entry name" value="biotin_synthase"/>
    <property type="match status" value="1"/>
</dbReference>
<dbReference type="SFLD" id="SFLDG01278">
    <property type="entry name" value="biotin_synthase_like"/>
    <property type="match status" value="1"/>
</dbReference>
<dbReference type="SMART" id="SM00876">
    <property type="entry name" value="BATS"/>
    <property type="match status" value="1"/>
</dbReference>
<dbReference type="SMART" id="SM00729">
    <property type="entry name" value="Elp3"/>
    <property type="match status" value="1"/>
</dbReference>
<dbReference type="SUPFAM" id="SSF102114">
    <property type="entry name" value="Radical SAM enzymes"/>
    <property type="match status" value="1"/>
</dbReference>
<dbReference type="PROSITE" id="PS51918">
    <property type="entry name" value="RADICAL_SAM"/>
    <property type="match status" value="1"/>
</dbReference>
<reference key="1">
    <citation type="journal article" date="2006" name="Nat. Biotechnol.">
        <title>Genome sequence of the bioplastic-producing 'Knallgas' bacterium Ralstonia eutropha H16.</title>
        <authorList>
            <person name="Pohlmann A."/>
            <person name="Fricke W.F."/>
            <person name="Reinecke F."/>
            <person name="Kusian B."/>
            <person name="Liesegang H."/>
            <person name="Cramm R."/>
            <person name="Eitinger T."/>
            <person name="Ewering C."/>
            <person name="Poetter M."/>
            <person name="Schwartz E."/>
            <person name="Strittmatter A."/>
            <person name="Voss I."/>
            <person name="Gottschalk G."/>
            <person name="Steinbuechel A."/>
            <person name="Friedrich B."/>
            <person name="Bowien B."/>
        </authorList>
    </citation>
    <scope>NUCLEOTIDE SEQUENCE [LARGE SCALE GENOMIC DNA]</scope>
    <source>
        <strain>ATCC 17699 / DSM 428 / KCTC 22496 / NCIMB 10442 / H16 / Stanier 337</strain>
    </source>
</reference>
<accession>Q0KF86</accession>
<protein>
    <recommendedName>
        <fullName evidence="1">Biotin synthase</fullName>
        <ecNumber evidence="1">2.8.1.6</ecNumber>
    </recommendedName>
</protein>
<keyword id="KW-0001">2Fe-2S</keyword>
<keyword id="KW-0004">4Fe-4S</keyword>
<keyword id="KW-0093">Biotin biosynthesis</keyword>
<keyword id="KW-0408">Iron</keyword>
<keyword id="KW-0411">Iron-sulfur</keyword>
<keyword id="KW-0479">Metal-binding</keyword>
<keyword id="KW-1185">Reference proteome</keyword>
<keyword id="KW-0949">S-adenosyl-L-methionine</keyword>
<keyword id="KW-0808">Transferase</keyword>
<name>BIOB_CUPNH</name>
<comment type="function">
    <text evidence="1">Catalyzes the conversion of dethiobiotin (DTB) to biotin by the insertion of a sulfur atom into dethiobiotin via a radical-based mechanism.</text>
</comment>
<comment type="catalytic activity">
    <reaction evidence="1">
        <text>(4R,5S)-dethiobiotin + (sulfur carrier)-SH + 2 reduced [2Fe-2S]-[ferredoxin] + 2 S-adenosyl-L-methionine = (sulfur carrier)-H + biotin + 2 5'-deoxyadenosine + 2 L-methionine + 2 oxidized [2Fe-2S]-[ferredoxin]</text>
        <dbReference type="Rhea" id="RHEA:22060"/>
        <dbReference type="Rhea" id="RHEA-COMP:10000"/>
        <dbReference type="Rhea" id="RHEA-COMP:10001"/>
        <dbReference type="Rhea" id="RHEA-COMP:14737"/>
        <dbReference type="Rhea" id="RHEA-COMP:14739"/>
        <dbReference type="ChEBI" id="CHEBI:17319"/>
        <dbReference type="ChEBI" id="CHEBI:29917"/>
        <dbReference type="ChEBI" id="CHEBI:33737"/>
        <dbReference type="ChEBI" id="CHEBI:33738"/>
        <dbReference type="ChEBI" id="CHEBI:57586"/>
        <dbReference type="ChEBI" id="CHEBI:57844"/>
        <dbReference type="ChEBI" id="CHEBI:59789"/>
        <dbReference type="ChEBI" id="CHEBI:64428"/>
        <dbReference type="ChEBI" id="CHEBI:149473"/>
        <dbReference type="EC" id="2.8.1.6"/>
    </reaction>
</comment>
<comment type="cofactor">
    <cofactor evidence="1">
        <name>[4Fe-4S] cluster</name>
        <dbReference type="ChEBI" id="CHEBI:49883"/>
    </cofactor>
    <text evidence="1">Binds 1 [4Fe-4S] cluster. The cluster is coordinated with 3 cysteines and an exchangeable S-adenosyl-L-methionine.</text>
</comment>
<comment type="cofactor">
    <cofactor evidence="1">
        <name>[2Fe-2S] cluster</name>
        <dbReference type="ChEBI" id="CHEBI:190135"/>
    </cofactor>
    <text evidence="1">Binds 1 [2Fe-2S] cluster. The cluster is coordinated with 3 cysteines and 1 arginine.</text>
</comment>
<comment type="pathway">
    <text evidence="1">Cofactor biosynthesis; biotin biosynthesis; biotin from 7,8-diaminononanoate: step 2/2.</text>
</comment>
<comment type="subunit">
    <text evidence="1">Homodimer.</text>
</comment>
<comment type="similarity">
    <text evidence="1">Belongs to the radical SAM superfamily. Biotin synthase family.</text>
</comment>